<dbReference type="EMBL" id="KC162926">
    <property type="status" value="NOT_ANNOTATED_CDS"/>
    <property type="molecule type" value="Genomic_DNA"/>
</dbReference>
<dbReference type="EMDB" id="EMD-43530"/>
<dbReference type="EMDB" id="EMD-43531"/>
<dbReference type="SMR" id="P0DP08"/>
<dbReference type="FunCoup" id="P0DP08">
    <property type="interactions" value="344"/>
</dbReference>
<dbReference type="STRING" id="9606.ENSP00000478289"/>
<dbReference type="IMGT_GENE-DB" id="IGHV4-38-2"/>
<dbReference type="BioMuta" id="HGNC:5657"/>
<dbReference type="jPOST" id="P0DP08"/>
<dbReference type="MassIVE" id="P0DP08"/>
<dbReference type="PaxDb" id="9606-ENSP00000478289"/>
<dbReference type="AGR" id="HGNC:5657"/>
<dbReference type="GeneCards" id="IGHV4-38-2"/>
<dbReference type="HGNC" id="HGNC:5657">
    <property type="gene designation" value="IGHV4-38-2"/>
</dbReference>
<dbReference type="HPA" id="ENSG00000275063">
    <property type="expression patterns" value="Tissue enhanced (intestine, lymphoid tissue, urinary bladder)"/>
</dbReference>
<dbReference type="neXtProt" id="NX_P0DP08"/>
<dbReference type="VEuPathDB" id="HostDB:ENSG00000275063"/>
<dbReference type="eggNOG" id="ENOG502S5TB">
    <property type="taxonomic scope" value="Eukaryota"/>
</dbReference>
<dbReference type="GeneTree" id="ENSGT01030000234536"/>
<dbReference type="InParanoid" id="P0DP08"/>
<dbReference type="OMA" id="MQYPFTG"/>
<dbReference type="OrthoDB" id="9536275at2759"/>
<dbReference type="PAN-GO" id="P0DP08">
    <property type="GO annotations" value="11 GO annotations based on evolutionary models"/>
</dbReference>
<dbReference type="Pharos" id="P0DP08">
    <property type="development level" value="Tdark"/>
</dbReference>
<dbReference type="PRO" id="PR:P0DP08"/>
<dbReference type="Proteomes" id="UP000005640">
    <property type="component" value="Unplaced"/>
</dbReference>
<dbReference type="RNAct" id="P0DP08">
    <property type="molecule type" value="protein"/>
</dbReference>
<dbReference type="GO" id="GO:0005576">
    <property type="term" value="C:extracellular region"/>
    <property type="evidence" value="ECO:0007669"/>
    <property type="project" value="UniProtKB-SubCell"/>
</dbReference>
<dbReference type="GO" id="GO:0019814">
    <property type="term" value="C:immunoglobulin complex"/>
    <property type="evidence" value="ECO:0007669"/>
    <property type="project" value="UniProtKB-KW"/>
</dbReference>
<dbReference type="GO" id="GO:0005886">
    <property type="term" value="C:plasma membrane"/>
    <property type="evidence" value="ECO:0007669"/>
    <property type="project" value="UniProtKB-SubCell"/>
</dbReference>
<dbReference type="GO" id="GO:0003823">
    <property type="term" value="F:antigen binding"/>
    <property type="evidence" value="ECO:0000318"/>
    <property type="project" value="GO_Central"/>
</dbReference>
<dbReference type="GO" id="GO:0016064">
    <property type="term" value="P:immunoglobulin mediated immune response"/>
    <property type="evidence" value="ECO:0000318"/>
    <property type="project" value="GO_Central"/>
</dbReference>
<dbReference type="FunFam" id="2.60.40.10:FF:001119">
    <property type="entry name" value="Immunoglobulin heavy variable 4-30-4"/>
    <property type="match status" value="1"/>
</dbReference>
<dbReference type="Gene3D" id="2.60.40.10">
    <property type="entry name" value="Immunoglobulins"/>
    <property type="match status" value="1"/>
</dbReference>
<dbReference type="InterPro" id="IPR007110">
    <property type="entry name" value="Ig-like_dom"/>
</dbReference>
<dbReference type="InterPro" id="IPR036179">
    <property type="entry name" value="Ig-like_dom_sf"/>
</dbReference>
<dbReference type="InterPro" id="IPR013783">
    <property type="entry name" value="Ig-like_fold"/>
</dbReference>
<dbReference type="InterPro" id="IPR013106">
    <property type="entry name" value="Ig_V-set"/>
</dbReference>
<dbReference type="InterPro" id="IPR050199">
    <property type="entry name" value="IgHV"/>
</dbReference>
<dbReference type="PANTHER" id="PTHR23266">
    <property type="entry name" value="IMMUNOGLOBULIN HEAVY CHAIN"/>
    <property type="match status" value="1"/>
</dbReference>
<dbReference type="Pfam" id="PF07686">
    <property type="entry name" value="V-set"/>
    <property type="match status" value="1"/>
</dbReference>
<dbReference type="SMART" id="SM00406">
    <property type="entry name" value="IGv"/>
    <property type="match status" value="1"/>
</dbReference>
<dbReference type="SUPFAM" id="SSF48726">
    <property type="entry name" value="Immunoglobulin"/>
    <property type="match status" value="1"/>
</dbReference>
<dbReference type="PROSITE" id="PS50835">
    <property type="entry name" value="IG_LIKE"/>
    <property type="match status" value="1"/>
</dbReference>
<feature type="signal peptide" evidence="2">
    <location>
        <begin position="1"/>
        <end position="19"/>
    </location>
</feature>
<feature type="chain" id="PRO_0000439561" description="Immunoglobulin heavy variable 4-38-2" evidence="2">
    <location>
        <begin position="20"/>
        <end position="117"/>
    </location>
</feature>
<feature type="domain" description="Ig-like" evidence="3">
    <location>
        <begin position="20"/>
        <end position="117" status="greater than"/>
    </location>
</feature>
<feature type="region of interest" description="Framework-1" evidence="1">
    <location>
        <begin position="20"/>
        <end position="44"/>
    </location>
</feature>
<feature type="region of interest" description="Complementarity-determining-1" evidence="1">
    <location>
        <begin position="45"/>
        <end position="53"/>
    </location>
</feature>
<feature type="region of interest" description="Framework-2" evidence="1">
    <location>
        <begin position="54"/>
        <end position="70"/>
    </location>
</feature>
<feature type="region of interest" description="Complementarity-determining-2" evidence="1">
    <location>
        <begin position="71"/>
        <end position="77"/>
    </location>
</feature>
<feature type="region of interest" description="Framework-3" evidence="1">
    <location>
        <begin position="78"/>
        <end position="115"/>
    </location>
</feature>
<feature type="region of interest" description="Complementarity-determining-3" evidence="1">
    <location>
        <begin position="116"/>
        <end position="117" status="greater than"/>
    </location>
</feature>
<feature type="disulfide bond" evidence="3">
    <location>
        <begin position="41"/>
        <end position="115"/>
    </location>
</feature>
<feature type="non-terminal residue">
    <location>
        <position position="117"/>
    </location>
</feature>
<accession>P0DP08</accession>
<evidence type="ECO:0000250" key="1">
    <source>
        <dbReference type="UniProtKB" id="P23083"/>
    </source>
</evidence>
<evidence type="ECO:0000255" key="2"/>
<evidence type="ECO:0000255" key="3">
    <source>
        <dbReference type="PROSITE-ProRule" id="PRU00114"/>
    </source>
</evidence>
<evidence type="ECO:0000303" key="4">
    <source>
    </source>
</evidence>
<evidence type="ECO:0000303" key="5">
    <source>
    </source>
</evidence>
<evidence type="ECO:0000303" key="6">
    <source>
    </source>
</evidence>
<evidence type="ECO:0000303" key="7">
    <source>
    </source>
</evidence>
<evidence type="ECO:0000303" key="8">
    <source>
    </source>
</evidence>
<evidence type="ECO:0000303" key="9">
    <source ref="3"/>
</evidence>
<evidence type="ECO:0000305" key="10"/>
<evidence type="ECO:0000305" key="11">
    <source>
    </source>
</evidence>
<gene>
    <name evidence="4 9" type="primary">IGHV4-38-2</name>
</gene>
<comment type="function">
    <text evidence="5 6 7 8">V region of the variable domain of immunoglobulin heavy chains that participates in the antigen recognition (PubMed:24600447). Immunoglobulins, also known as antibodies, are membrane-bound or secreted glycoproteins produced by B lymphocytes. In the recognition phase of humoral immunity, the membrane-bound immunoglobulins serve as receptors which, upon binding of a specific antigen, trigger the clonal expansion and differentiation of B lymphocytes into immunoglobulins-secreting plasma cells. Secreted immunoglobulins mediate the effector phase of humoral immunity, which results in the elimination of bound antigens (PubMed:20176268, PubMed:22158414). The antigen binding site is formed by the variable domain of one heavy chain, together with that of its associated light chain. Thus, each immunoglobulin has two antigen binding sites with remarkable affinity for a particular antigen. The variable domains are assembled by a process called V-(D)-J rearrangement and can then be subjected to somatic hypermutations which, after exposure to antigen and selection, allow affinity maturation for a particular antigen (PubMed:17576170, PubMed:20176268).</text>
</comment>
<comment type="subunit">
    <text evidence="6">Immunoglobulins are composed of two identical heavy chains and two identical light chains; disulfide-linked.</text>
</comment>
<comment type="subcellular location">
    <subcellularLocation>
        <location evidence="6 7">Secreted</location>
    </subcellularLocation>
    <subcellularLocation>
        <location evidence="6 7">Cell membrane</location>
    </subcellularLocation>
</comment>
<comment type="polymorphism">
    <text evidence="10">There are several alleles. The sequence shown is that of IMGT allele IGHV4-38-2*02.</text>
</comment>
<comment type="caution">
    <text evidence="10">For examples of full-length immunoglobulin heavy chains (of different isotypes) see AC P0DOX2, AC P0DOX3, AC P0DOX4, AC P0DOX5 and AC P0DOX6.</text>
</comment>
<comment type="caution">
    <text evidence="11">Watson et al. identified this gene on chromosome 14. However, it is not currently present on the reference genome assembly (GRCh38/hg38).</text>
</comment>
<keyword id="KW-1064">Adaptive immunity</keyword>
<keyword id="KW-1003">Cell membrane</keyword>
<keyword id="KW-1015">Disulfide bond</keyword>
<keyword id="KW-0391">Immunity</keyword>
<keyword id="KW-1280">Immunoglobulin</keyword>
<keyword id="KW-0393">Immunoglobulin domain</keyword>
<keyword id="KW-0472">Membrane</keyword>
<keyword id="KW-1267">Proteomics identification</keyword>
<keyword id="KW-1185">Reference proteome</keyword>
<keyword id="KW-0964">Secreted</keyword>
<keyword id="KW-0732">Signal</keyword>
<sequence>MKHLWFFLLLVAAPRWVLSQVQLQESGPGLVKPSETLSLTCTVSGYSISSGYYWGWIRQPPGKGLEWIGSIYHSGSTYYNPSLKSRVTISVDTSKNQFSLKLSSVTAADTAVYYCAR</sequence>
<organism>
    <name type="scientific">Homo sapiens</name>
    <name type="common">Human</name>
    <dbReference type="NCBI Taxonomy" id="9606"/>
    <lineage>
        <taxon>Eukaryota</taxon>
        <taxon>Metazoa</taxon>
        <taxon>Chordata</taxon>
        <taxon>Craniata</taxon>
        <taxon>Vertebrata</taxon>
        <taxon>Euteleostomi</taxon>
        <taxon>Mammalia</taxon>
        <taxon>Eutheria</taxon>
        <taxon>Euarchontoglires</taxon>
        <taxon>Primates</taxon>
        <taxon>Haplorrhini</taxon>
        <taxon>Catarrhini</taxon>
        <taxon>Hominidae</taxon>
        <taxon>Homo</taxon>
    </lineage>
</organism>
<protein>
    <recommendedName>
        <fullName evidence="4 9">Immunoglobulin heavy variable 4-38-2</fullName>
    </recommendedName>
</protein>
<name>HVD82_HUMAN</name>
<proteinExistence type="evidence at protein level"/>
<reference key="1">
    <citation type="journal article" date="2013" name="Am. J. Hum. Genet.">
        <title>Complete haplotype sequence of the human immunoglobulin heavy-chain variable, diversity, and joining genes and characterization of allelic and copy-number variation.</title>
        <authorList>
            <person name="Watson C.T."/>
            <person name="Steinberg K.M."/>
            <person name="Huddleston J."/>
            <person name="Warren R.L."/>
            <person name="Malig M."/>
            <person name="Schein J."/>
            <person name="Willsey A.J."/>
            <person name="Joy J.B."/>
            <person name="Scott J.K."/>
            <person name="Graves T.A."/>
            <person name="Wilson R.K."/>
            <person name="Holt R.A."/>
            <person name="Eichler E.E."/>
            <person name="Breden F."/>
        </authorList>
    </citation>
    <scope>NUCLEOTIDE SEQUENCE [GENOMIC DNA] (IMGT ALLELE IGHV4-38-2*02)</scope>
</reference>
<reference key="2">
    <citation type="journal article" date="2001" name="Exp. Clin. Immunogenet.">
        <title>Nomenclature of the human immunoglobulin heavy (IGH) genes.</title>
        <authorList>
            <person name="Lefranc M.P."/>
        </authorList>
    </citation>
    <scope>NOMENCLATURE</scope>
</reference>
<reference key="3">
    <citation type="book" date="2001" name="The Immunoglobulin FactsBook.">
        <title>The Immunoglobulin FactsBook.</title>
        <editorList>
            <person name="Lefranc M.P."/>
            <person name="Lefranc G."/>
        </editorList>
        <authorList>
            <person name="Lefranc M.P."/>
            <person name="Lefranc G."/>
        </authorList>
    </citation>
    <scope>NOMENCLATURE</scope>
</reference>
<reference key="4">
    <citation type="journal article" date="2007" name="Annu. Rev. Genet.">
        <title>Immunoglobulin somatic hypermutation.</title>
        <authorList>
            <person name="Teng G."/>
            <person name="Papavasiliou F.N."/>
        </authorList>
    </citation>
    <scope>REVIEW ON SOMATIC HYPERMUTATION</scope>
</reference>
<reference key="5">
    <citation type="journal article" date="2010" name="J. Allergy Clin. Immunol.">
        <title>Structure and function of immunoglobulins.</title>
        <authorList>
            <person name="Schroeder H.W. Jr."/>
            <person name="Cavacini L."/>
        </authorList>
    </citation>
    <scope>REVIEW ON IMMUNOGLOBULINS</scope>
</reference>
<reference key="6">
    <citation type="journal article" date="2012" name="Nat. Rev. Immunol.">
        <title>Molecular programming of B cell memory.</title>
        <authorList>
            <person name="McHeyzer-Williams M."/>
            <person name="Okitsu S."/>
            <person name="Wang N."/>
            <person name="McHeyzer-Williams L."/>
        </authorList>
    </citation>
    <scope>REVIEW ON FUNCTION</scope>
</reference>
<reference key="7">
    <citation type="journal article" date="2014" name="Front. Immunol.">
        <title>Immunoglobulin and T Cell Receptor Genes: IMGT((R)) and the Birth and Rise of Immunoinformatics.</title>
        <authorList>
            <person name="Lefranc M.P."/>
        </authorList>
    </citation>
    <scope>NOMENCLATURE</scope>
</reference>